<name>CYSR_SYNE7</name>
<dbReference type="EMBL" id="M65247">
    <property type="protein sequence ID" value="AAA73046.1"/>
    <property type="molecule type" value="Genomic_DNA"/>
</dbReference>
<dbReference type="EMBL" id="CP000100">
    <property type="protein sequence ID" value="ABB57714.1"/>
    <property type="molecule type" value="Genomic_DNA"/>
</dbReference>
<dbReference type="RefSeq" id="WP_011244716.1">
    <property type="nucleotide sequence ID" value="NZ_JACJTX010000001.1"/>
</dbReference>
<dbReference type="SMR" id="P27369"/>
<dbReference type="STRING" id="1140.Synpcc7942_1684"/>
<dbReference type="PaxDb" id="1140-Synpcc7942_1684"/>
<dbReference type="KEGG" id="syf:Synpcc7942_1684"/>
<dbReference type="eggNOG" id="COG0664">
    <property type="taxonomic scope" value="Bacteria"/>
</dbReference>
<dbReference type="HOGENOM" id="CLU_075053_8_1_3"/>
<dbReference type="OrthoDB" id="581549at2"/>
<dbReference type="BioCyc" id="SYNEL:SYNPCC7942_1684-MONOMER"/>
<dbReference type="Proteomes" id="UP000889800">
    <property type="component" value="Chromosome"/>
</dbReference>
<dbReference type="GO" id="GO:0005737">
    <property type="term" value="C:cytoplasm"/>
    <property type="evidence" value="ECO:0007669"/>
    <property type="project" value="UniProtKB-SubCell"/>
</dbReference>
<dbReference type="GO" id="GO:0003677">
    <property type="term" value="F:DNA binding"/>
    <property type="evidence" value="ECO:0007669"/>
    <property type="project" value="UniProtKB-KW"/>
</dbReference>
<dbReference type="GO" id="GO:0003700">
    <property type="term" value="F:DNA-binding transcription factor activity"/>
    <property type="evidence" value="ECO:0007669"/>
    <property type="project" value="InterPro"/>
</dbReference>
<dbReference type="CDD" id="cd00092">
    <property type="entry name" value="HTH_CRP"/>
    <property type="match status" value="1"/>
</dbReference>
<dbReference type="Gene3D" id="1.10.10.10">
    <property type="entry name" value="Winged helix-like DNA-binding domain superfamily/Winged helix DNA-binding domain"/>
    <property type="match status" value="1"/>
</dbReference>
<dbReference type="InterPro" id="IPR018490">
    <property type="entry name" value="cNMP-bd_dom_sf"/>
</dbReference>
<dbReference type="InterPro" id="IPR012318">
    <property type="entry name" value="HTH_CRP"/>
</dbReference>
<dbReference type="InterPro" id="IPR018335">
    <property type="entry name" value="Tscrpt_reg_HTH_Crp-type_CS"/>
</dbReference>
<dbReference type="InterPro" id="IPR036388">
    <property type="entry name" value="WH-like_DNA-bd_sf"/>
</dbReference>
<dbReference type="InterPro" id="IPR036390">
    <property type="entry name" value="WH_DNA-bd_sf"/>
</dbReference>
<dbReference type="Pfam" id="PF13545">
    <property type="entry name" value="HTH_Crp_2"/>
    <property type="match status" value="1"/>
</dbReference>
<dbReference type="SMART" id="SM00419">
    <property type="entry name" value="HTH_CRP"/>
    <property type="match status" value="1"/>
</dbReference>
<dbReference type="SUPFAM" id="SSF51206">
    <property type="entry name" value="cAMP-binding domain-like"/>
    <property type="match status" value="1"/>
</dbReference>
<dbReference type="SUPFAM" id="SSF46785">
    <property type="entry name" value="Winged helix' DNA-binding domain"/>
    <property type="match status" value="1"/>
</dbReference>
<dbReference type="PROSITE" id="PS00042">
    <property type="entry name" value="HTH_CRP_1"/>
    <property type="match status" value="1"/>
</dbReference>
<dbReference type="PROSITE" id="PS51063">
    <property type="entry name" value="HTH_CRP_2"/>
    <property type="match status" value="1"/>
</dbReference>
<keyword id="KW-0963">Cytoplasm</keyword>
<keyword id="KW-0238">DNA-binding</keyword>
<keyword id="KW-1185">Reference proteome</keyword>
<keyword id="KW-0346">Stress response</keyword>
<keyword id="KW-0764">Sulfate transport</keyword>
<keyword id="KW-0804">Transcription</keyword>
<keyword id="KW-0805">Transcription regulation</keyword>
<keyword id="KW-0813">Transport</keyword>
<comment type="function">
    <text>Probably regulates the expression of genes from the sulfate permease complex.</text>
</comment>
<comment type="subcellular location">
    <subcellularLocation>
        <location>Cytoplasm</location>
    </subcellularLocation>
</comment>
<comment type="induction">
    <text>By sulfur deprivation.</text>
</comment>
<accession>P27369</accession>
<accession>Q31MK5</accession>
<gene>
    <name type="primary">cysR</name>
    <name type="ordered locus">Synpcc7942_1684</name>
</gene>
<proteinExistence type="evidence at transcript level"/>
<reference key="1">
    <citation type="journal article" date="1991" name="J. Bacteriol.">
        <title>Characterization and mutagenesis of sulfur-regulated genes in a cyanobacterium: evidence for function in sulfate transport.</title>
        <authorList>
            <person name="Laudenbach D.E."/>
            <person name="Grossman A.R."/>
        </authorList>
    </citation>
    <scope>NUCLEOTIDE SEQUENCE [GENOMIC DNA]</scope>
</reference>
<reference key="2">
    <citation type="submission" date="2005-08" db="EMBL/GenBank/DDBJ databases">
        <title>Complete sequence of chromosome 1 of Synechococcus elongatus PCC 7942.</title>
        <authorList>
            <consortium name="US DOE Joint Genome Institute"/>
            <person name="Copeland A."/>
            <person name="Lucas S."/>
            <person name="Lapidus A."/>
            <person name="Barry K."/>
            <person name="Detter J.C."/>
            <person name="Glavina T."/>
            <person name="Hammon N."/>
            <person name="Israni S."/>
            <person name="Pitluck S."/>
            <person name="Schmutz J."/>
            <person name="Larimer F."/>
            <person name="Land M."/>
            <person name="Kyrpides N."/>
            <person name="Lykidis A."/>
            <person name="Golden S."/>
            <person name="Richardson P."/>
        </authorList>
    </citation>
    <scope>NUCLEOTIDE SEQUENCE [LARGE SCALE GENOMIC DNA]</scope>
    <source>
        <strain>ATCC 33912 / PCC 7942 / FACHB-805</strain>
    </source>
</reference>
<evidence type="ECO:0000255" key="1">
    <source>
        <dbReference type="PROSITE-ProRule" id="PRU00387"/>
    </source>
</evidence>
<sequence length="206" mass="22760">MVREPASTLLPPTSPATPAPHRLLIGRRGMVPTGANVIWKIQSGLVRSSTWGEEGDMISLGLWGPGDLIGRPLSCLDPYELECLTAVEVVAVSDPALESHESLVRSLRYTERLLSITRLRRAEAKLASLLGWIGERFGQPGATGWEIDLRRIPLTHQVIAELSGSTRVTTTRLLGEFRQAGRIHRRDRALIVRYPETLYPPARLSA</sequence>
<organism>
    <name type="scientific">Synechococcus elongatus (strain ATCC 33912 / PCC 7942 / FACHB-805)</name>
    <name type="common">Anacystis nidulans R2</name>
    <dbReference type="NCBI Taxonomy" id="1140"/>
    <lineage>
        <taxon>Bacteria</taxon>
        <taxon>Bacillati</taxon>
        <taxon>Cyanobacteriota</taxon>
        <taxon>Cyanophyceae</taxon>
        <taxon>Synechococcales</taxon>
        <taxon>Synechococcaceae</taxon>
        <taxon>Synechococcus</taxon>
    </lineage>
</organism>
<protein>
    <recommendedName>
        <fullName>Regulatory protein CysR</fullName>
    </recommendedName>
</protein>
<feature type="chain" id="PRO_0000100153" description="Regulatory protein CysR">
    <location>
        <begin position="1"/>
        <end position="206"/>
    </location>
</feature>
<feature type="domain" description="HTH crp-type" evidence="1">
    <location>
        <begin position="120"/>
        <end position="196"/>
    </location>
</feature>
<feature type="DNA-binding region" description="H-T-H motif" evidence="1">
    <location>
        <begin position="156"/>
        <end position="175"/>
    </location>
</feature>